<organism>
    <name type="scientific">Mycoplasmopsis pulmonis (strain UAB CTIP)</name>
    <name type="common">Mycoplasma pulmonis</name>
    <dbReference type="NCBI Taxonomy" id="272635"/>
    <lineage>
        <taxon>Bacteria</taxon>
        <taxon>Bacillati</taxon>
        <taxon>Mycoplasmatota</taxon>
        <taxon>Mycoplasmoidales</taxon>
        <taxon>Metamycoplasmataceae</taxon>
        <taxon>Mycoplasmopsis</taxon>
    </lineage>
</organism>
<accession>Q98QU0</accession>
<keyword id="KW-0066">ATP synthesis</keyword>
<keyword id="KW-1003">Cell membrane</keyword>
<keyword id="KW-0138">CF(0)</keyword>
<keyword id="KW-0375">Hydrogen ion transport</keyword>
<keyword id="KW-0406">Ion transport</keyword>
<keyword id="KW-0446">Lipid-binding</keyword>
<keyword id="KW-0472">Membrane</keyword>
<keyword id="KW-1185">Reference proteome</keyword>
<keyword id="KW-0812">Transmembrane</keyword>
<keyword id="KW-1133">Transmembrane helix</keyword>
<keyword id="KW-0813">Transport</keyword>
<protein>
    <recommendedName>
        <fullName evidence="1">ATP synthase subunit c</fullName>
    </recommendedName>
    <alternativeName>
        <fullName evidence="1">ATP synthase F(0) sector subunit c</fullName>
    </alternativeName>
    <alternativeName>
        <fullName evidence="1">F-type ATPase subunit c</fullName>
        <shortName evidence="1">F-ATPase subunit c</shortName>
    </alternativeName>
    <alternativeName>
        <fullName evidence="1">Lipid-binding protein</fullName>
    </alternativeName>
</protein>
<sequence>MENIISLLALKNDPTSATTGAGLVAVGAGLASIGNFGTGLGQGLSAGRAAEAVGRNPEAIKKIRSLMIIGMAISESASLYSFIIAILLVFVY</sequence>
<gene>
    <name evidence="1" type="primary">atpE</name>
    <name type="ordered locus">MYPU_2710</name>
</gene>
<evidence type="ECO:0000255" key="1">
    <source>
        <dbReference type="HAMAP-Rule" id="MF_01396"/>
    </source>
</evidence>
<name>ATPL_MYCPU</name>
<reference key="1">
    <citation type="journal article" date="2001" name="Nucleic Acids Res.">
        <title>The complete genome sequence of the murine respiratory pathogen Mycoplasma pulmonis.</title>
        <authorList>
            <person name="Chambaud I."/>
            <person name="Heilig R."/>
            <person name="Ferris S."/>
            <person name="Barbe V."/>
            <person name="Samson D."/>
            <person name="Galisson F."/>
            <person name="Moszer I."/>
            <person name="Dybvig K."/>
            <person name="Wroblewski H."/>
            <person name="Viari A."/>
            <person name="Rocha E.P.C."/>
            <person name="Blanchard A."/>
        </authorList>
    </citation>
    <scope>NUCLEOTIDE SEQUENCE [LARGE SCALE GENOMIC DNA]</scope>
    <source>
        <strain>UAB CTIP</strain>
    </source>
</reference>
<proteinExistence type="inferred from homology"/>
<dbReference type="EMBL" id="AL445563">
    <property type="protein sequence ID" value="CAC13444.1"/>
    <property type="molecule type" value="Genomic_DNA"/>
</dbReference>
<dbReference type="PIR" id="G90545">
    <property type="entry name" value="G90545"/>
</dbReference>
<dbReference type="RefSeq" id="WP_010925075.1">
    <property type="nucleotide sequence ID" value="NC_002771.1"/>
</dbReference>
<dbReference type="SMR" id="Q98QU0"/>
<dbReference type="STRING" id="272635.gene:17576861"/>
<dbReference type="KEGG" id="mpu:MYPU_2710"/>
<dbReference type="eggNOG" id="COG0636">
    <property type="taxonomic scope" value="Bacteria"/>
</dbReference>
<dbReference type="HOGENOM" id="CLU_148047_2_2_14"/>
<dbReference type="BioCyc" id="MPUL272635:G1GT6-272-MONOMER"/>
<dbReference type="Proteomes" id="UP000000528">
    <property type="component" value="Chromosome"/>
</dbReference>
<dbReference type="GO" id="GO:0005886">
    <property type="term" value="C:plasma membrane"/>
    <property type="evidence" value="ECO:0007669"/>
    <property type="project" value="UniProtKB-SubCell"/>
</dbReference>
<dbReference type="GO" id="GO:0045259">
    <property type="term" value="C:proton-transporting ATP synthase complex"/>
    <property type="evidence" value="ECO:0007669"/>
    <property type="project" value="UniProtKB-KW"/>
</dbReference>
<dbReference type="GO" id="GO:0033177">
    <property type="term" value="C:proton-transporting two-sector ATPase complex, proton-transporting domain"/>
    <property type="evidence" value="ECO:0007669"/>
    <property type="project" value="InterPro"/>
</dbReference>
<dbReference type="GO" id="GO:0008289">
    <property type="term" value="F:lipid binding"/>
    <property type="evidence" value="ECO:0007669"/>
    <property type="project" value="UniProtKB-KW"/>
</dbReference>
<dbReference type="GO" id="GO:0046933">
    <property type="term" value="F:proton-transporting ATP synthase activity, rotational mechanism"/>
    <property type="evidence" value="ECO:0007669"/>
    <property type="project" value="UniProtKB-UniRule"/>
</dbReference>
<dbReference type="CDD" id="cd18184">
    <property type="entry name" value="ATP-synt_Fo_c_NaATPase"/>
    <property type="match status" value="1"/>
</dbReference>
<dbReference type="Gene3D" id="1.20.120.610">
    <property type="entry name" value="lithium bound rotor ring of v- atpase"/>
    <property type="match status" value="1"/>
</dbReference>
<dbReference type="HAMAP" id="MF_01396">
    <property type="entry name" value="ATP_synth_c_bact"/>
    <property type="match status" value="1"/>
</dbReference>
<dbReference type="InterPro" id="IPR005953">
    <property type="entry name" value="ATP_synth_csu_bac/chlpt"/>
</dbReference>
<dbReference type="InterPro" id="IPR000454">
    <property type="entry name" value="ATP_synth_F0_csu"/>
</dbReference>
<dbReference type="InterPro" id="IPR020537">
    <property type="entry name" value="ATP_synth_F0_csu_DDCD_BS"/>
</dbReference>
<dbReference type="InterPro" id="IPR002379">
    <property type="entry name" value="ATPase_proteolipid_c-like_dom"/>
</dbReference>
<dbReference type="InterPro" id="IPR035921">
    <property type="entry name" value="F/V-ATP_Csub_sf"/>
</dbReference>
<dbReference type="NCBIfam" id="TIGR01260">
    <property type="entry name" value="ATP_synt_c"/>
    <property type="match status" value="1"/>
</dbReference>
<dbReference type="PANTHER" id="PTHR10031">
    <property type="entry name" value="ATP SYNTHASE LIPID-BINDING PROTEIN, MITOCHONDRIAL"/>
    <property type="match status" value="1"/>
</dbReference>
<dbReference type="PANTHER" id="PTHR10031:SF0">
    <property type="entry name" value="ATPASE PROTEIN 9"/>
    <property type="match status" value="1"/>
</dbReference>
<dbReference type="Pfam" id="PF00137">
    <property type="entry name" value="ATP-synt_C"/>
    <property type="match status" value="1"/>
</dbReference>
<dbReference type="PRINTS" id="PR00124">
    <property type="entry name" value="ATPASEC"/>
</dbReference>
<dbReference type="SUPFAM" id="SSF81333">
    <property type="entry name" value="F1F0 ATP synthase subunit C"/>
    <property type="match status" value="1"/>
</dbReference>
<dbReference type="PROSITE" id="PS00605">
    <property type="entry name" value="ATPASE_C"/>
    <property type="match status" value="1"/>
</dbReference>
<comment type="function">
    <text evidence="1">F(1)F(0) ATP synthase produces ATP from ADP in the presence of a proton or sodium gradient. F-type ATPases consist of two structural domains, F(1) containing the extramembraneous catalytic core and F(0) containing the membrane proton channel, linked together by a central stalk and a peripheral stalk. During catalysis, ATP synthesis in the catalytic domain of F(1) is coupled via a rotary mechanism of the central stalk subunits to proton translocation.</text>
</comment>
<comment type="function">
    <text evidence="1">Key component of the F(0) channel; it plays a direct role in translocation across the membrane. A homomeric c-ring of between 10-14 subunits forms the central stalk rotor element with the F(1) delta and epsilon subunits.</text>
</comment>
<comment type="subunit">
    <text evidence="1">F-type ATPases have 2 components, F(1) - the catalytic core - and F(0) - the membrane proton channel. F(1) has five subunits: alpha(3), beta(3), gamma(1), delta(1), epsilon(1). F(0) has three main subunits: a(1), b(2) and c(10-14). The alpha and beta chains form an alternating ring which encloses part of the gamma chain. F(1) is attached to F(0) by a central stalk formed by the gamma and epsilon chains, while a peripheral stalk is formed by the delta and b chains.</text>
</comment>
<comment type="subcellular location">
    <subcellularLocation>
        <location evidence="1">Cell membrane</location>
        <topology evidence="1">Multi-pass membrane protein</topology>
    </subcellularLocation>
</comment>
<comment type="similarity">
    <text evidence="1">Belongs to the ATPase C chain family.</text>
</comment>
<feature type="chain" id="PRO_0000365904" description="ATP synthase subunit c">
    <location>
        <begin position="1"/>
        <end position="92"/>
    </location>
</feature>
<feature type="transmembrane region" description="Helical" evidence="1">
    <location>
        <begin position="20"/>
        <end position="40"/>
    </location>
</feature>
<feature type="transmembrane region" description="Helical" evidence="1">
    <location>
        <begin position="71"/>
        <end position="91"/>
    </location>
</feature>
<feature type="site" description="Reversibly protonated during proton transport" evidence="1">
    <location>
        <position position="75"/>
    </location>
</feature>